<accession>A6UB73</accession>
<keyword id="KW-0227">DNA damage</keyword>
<keyword id="KW-0234">DNA repair</keyword>
<keyword id="KW-0235">DNA replication</keyword>
<keyword id="KW-0436">Ligase</keyword>
<keyword id="KW-0460">Magnesium</keyword>
<keyword id="KW-0464">Manganese</keyword>
<keyword id="KW-0479">Metal-binding</keyword>
<keyword id="KW-0520">NAD</keyword>
<keyword id="KW-0862">Zinc</keyword>
<gene>
    <name evidence="1" type="primary">ligA</name>
    <name type="ordered locus">Smed_2070</name>
</gene>
<name>DNLJ_SINMW</name>
<evidence type="ECO:0000255" key="1">
    <source>
        <dbReference type="HAMAP-Rule" id="MF_01588"/>
    </source>
</evidence>
<organism>
    <name type="scientific">Sinorhizobium medicae (strain WSM419)</name>
    <name type="common">Ensifer medicae</name>
    <dbReference type="NCBI Taxonomy" id="366394"/>
    <lineage>
        <taxon>Bacteria</taxon>
        <taxon>Pseudomonadati</taxon>
        <taxon>Pseudomonadota</taxon>
        <taxon>Alphaproteobacteria</taxon>
        <taxon>Hyphomicrobiales</taxon>
        <taxon>Rhizobiaceae</taxon>
        <taxon>Sinorhizobium/Ensifer group</taxon>
        <taxon>Sinorhizobium</taxon>
    </lineage>
</organism>
<dbReference type="EC" id="6.5.1.2" evidence="1"/>
<dbReference type="EMBL" id="CP000738">
    <property type="protein sequence ID" value="ABR60903.1"/>
    <property type="molecule type" value="Genomic_DNA"/>
</dbReference>
<dbReference type="RefSeq" id="WP_011976200.1">
    <property type="nucleotide sequence ID" value="NC_009636.1"/>
</dbReference>
<dbReference type="RefSeq" id="YP_001327738.1">
    <property type="nucleotide sequence ID" value="NC_009636.1"/>
</dbReference>
<dbReference type="SMR" id="A6UB73"/>
<dbReference type="STRING" id="366394.Smed_2070"/>
<dbReference type="GeneID" id="61612979"/>
<dbReference type="KEGG" id="smd:Smed_2070"/>
<dbReference type="PATRIC" id="fig|366394.8.peg.5227"/>
<dbReference type="eggNOG" id="COG0272">
    <property type="taxonomic scope" value="Bacteria"/>
</dbReference>
<dbReference type="HOGENOM" id="CLU_007764_2_0_5"/>
<dbReference type="OrthoDB" id="9759736at2"/>
<dbReference type="Proteomes" id="UP000001108">
    <property type="component" value="Chromosome"/>
</dbReference>
<dbReference type="GO" id="GO:0005829">
    <property type="term" value="C:cytosol"/>
    <property type="evidence" value="ECO:0007669"/>
    <property type="project" value="TreeGrafter"/>
</dbReference>
<dbReference type="GO" id="GO:0003677">
    <property type="term" value="F:DNA binding"/>
    <property type="evidence" value="ECO:0007669"/>
    <property type="project" value="InterPro"/>
</dbReference>
<dbReference type="GO" id="GO:0003911">
    <property type="term" value="F:DNA ligase (NAD+) activity"/>
    <property type="evidence" value="ECO:0007669"/>
    <property type="project" value="UniProtKB-UniRule"/>
</dbReference>
<dbReference type="GO" id="GO:0046872">
    <property type="term" value="F:metal ion binding"/>
    <property type="evidence" value="ECO:0007669"/>
    <property type="project" value="UniProtKB-KW"/>
</dbReference>
<dbReference type="GO" id="GO:0006281">
    <property type="term" value="P:DNA repair"/>
    <property type="evidence" value="ECO:0007669"/>
    <property type="project" value="UniProtKB-KW"/>
</dbReference>
<dbReference type="GO" id="GO:0006260">
    <property type="term" value="P:DNA replication"/>
    <property type="evidence" value="ECO:0007669"/>
    <property type="project" value="UniProtKB-KW"/>
</dbReference>
<dbReference type="CDD" id="cd17748">
    <property type="entry name" value="BRCT_DNA_ligase_like"/>
    <property type="match status" value="1"/>
</dbReference>
<dbReference type="CDD" id="cd00114">
    <property type="entry name" value="LIGANc"/>
    <property type="match status" value="1"/>
</dbReference>
<dbReference type="FunFam" id="3.30.470.30:FF:000001">
    <property type="entry name" value="DNA ligase"/>
    <property type="match status" value="1"/>
</dbReference>
<dbReference type="Gene3D" id="6.20.10.30">
    <property type="match status" value="1"/>
</dbReference>
<dbReference type="Gene3D" id="1.10.150.20">
    <property type="entry name" value="5' to 3' exonuclease, C-terminal subdomain"/>
    <property type="match status" value="2"/>
</dbReference>
<dbReference type="Gene3D" id="3.40.50.10190">
    <property type="entry name" value="BRCT domain"/>
    <property type="match status" value="1"/>
</dbReference>
<dbReference type="Gene3D" id="3.30.470.30">
    <property type="entry name" value="DNA ligase/mRNA capping enzyme"/>
    <property type="match status" value="1"/>
</dbReference>
<dbReference type="Gene3D" id="1.10.287.610">
    <property type="entry name" value="Helix hairpin bin"/>
    <property type="match status" value="1"/>
</dbReference>
<dbReference type="Gene3D" id="2.40.50.140">
    <property type="entry name" value="Nucleic acid-binding proteins"/>
    <property type="match status" value="1"/>
</dbReference>
<dbReference type="HAMAP" id="MF_01588">
    <property type="entry name" value="DNA_ligase_A"/>
    <property type="match status" value="1"/>
</dbReference>
<dbReference type="InterPro" id="IPR001357">
    <property type="entry name" value="BRCT_dom"/>
</dbReference>
<dbReference type="InterPro" id="IPR036420">
    <property type="entry name" value="BRCT_dom_sf"/>
</dbReference>
<dbReference type="InterPro" id="IPR041663">
    <property type="entry name" value="DisA/LigA_HHH"/>
</dbReference>
<dbReference type="InterPro" id="IPR001679">
    <property type="entry name" value="DNA_ligase"/>
</dbReference>
<dbReference type="InterPro" id="IPR018239">
    <property type="entry name" value="DNA_ligase_AS"/>
</dbReference>
<dbReference type="InterPro" id="IPR033136">
    <property type="entry name" value="DNA_ligase_CS"/>
</dbReference>
<dbReference type="InterPro" id="IPR013839">
    <property type="entry name" value="DNAligase_adenylation"/>
</dbReference>
<dbReference type="InterPro" id="IPR013840">
    <property type="entry name" value="DNAligase_N"/>
</dbReference>
<dbReference type="InterPro" id="IPR003583">
    <property type="entry name" value="Hlx-hairpin-Hlx_DNA-bd_motif"/>
</dbReference>
<dbReference type="InterPro" id="IPR012340">
    <property type="entry name" value="NA-bd_OB-fold"/>
</dbReference>
<dbReference type="InterPro" id="IPR004150">
    <property type="entry name" value="NAD_DNA_ligase_OB"/>
</dbReference>
<dbReference type="InterPro" id="IPR010994">
    <property type="entry name" value="RuvA_2-like"/>
</dbReference>
<dbReference type="NCBIfam" id="TIGR00575">
    <property type="entry name" value="dnlj"/>
    <property type="match status" value="1"/>
</dbReference>
<dbReference type="NCBIfam" id="NF005932">
    <property type="entry name" value="PRK07956.1"/>
    <property type="match status" value="1"/>
</dbReference>
<dbReference type="PANTHER" id="PTHR23389">
    <property type="entry name" value="CHROMOSOME TRANSMISSION FIDELITY FACTOR 18"/>
    <property type="match status" value="1"/>
</dbReference>
<dbReference type="PANTHER" id="PTHR23389:SF9">
    <property type="entry name" value="DNA LIGASE"/>
    <property type="match status" value="1"/>
</dbReference>
<dbReference type="Pfam" id="PF00533">
    <property type="entry name" value="BRCT"/>
    <property type="match status" value="1"/>
</dbReference>
<dbReference type="Pfam" id="PF01653">
    <property type="entry name" value="DNA_ligase_aden"/>
    <property type="match status" value="1"/>
</dbReference>
<dbReference type="Pfam" id="PF03120">
    <property type="entry name" value="DNA_ligase_OB"/>
    <property type="match status" value="1"/>
</dbReference>
<dbReference type="Pfam" id="PF12826">
    <property type="entry name" value="HHH_2"/>
    <property type="match status" value="1"/>
</dbReference>
<dbReference type="PIRSF" id="PIRSF001604">
    <property type="entry name" value="LigA"/>
    <property type="match status" value="1"/>
</dbReference>
<dbReference type="SMART" id="SM00292">
    <property type="entry name" value="BRCT"/>
    <property type="match status" value="1"/>
</dbReference>
<dbReference type="SMART" id="SM00278">
    <property type="entry name" value="HhH1"/>
    <property type="match status" value="3"/>
</dbReference>
<dbReference type="SMART" id="SM00532">
    <property type="entry name" value="LIGANc"/>
    <property type="match status" value="1"/>
</dbReference>
<dbReference type="SUPFAM" id="SSF52113">
    <property type="entry name" value="BRCT domain"/>
    <property type="match status" value="1"/>
</dbReference>
<dbReference type="SUPFAM" id="SSF56091">
    <property type="entry name" value="DNA ligase/mRNA capping enzyme, catalytic domain"/>
    <property type="match status" value="1"/>
</dbReference>
<dbReference type="SUPFAM" id="SSF50249">
    <property type="entry name" value="Nucleic acid-binding proteins"/>
    <property type="match status" value="1"/>
</dbReference>
<dbReference type="SUPFAM" id="SSF47781">
    <property type="entry name" value="RuvA domain 2-like"/>
    <property type="match status" value="1"/>
</dbReference>
<dbReference type="PROSITE" id="PS50172">
    <property type="entry name" value="BRCT"/>
    <property type="match status" value="1"/>
</dbReference>
<dbReference type="PROSITE" id="PS01055">
    <property type="entry name" value="DNA_LIGASE_N1"/>
    <property type="match status" value="1"/>
</dbReference>
<dbReference type="PROSITE" id="PS01056">
    <property type="entry name" value="DNA_LIGASE_N2"/>
    <property type="match status" value="1"/>
</dbReference>
<proteinExistence type="inferred from homology"/>
<comment type="function">
    <text evidence="1">DNA ligase that catalyzes the formation of phosphodiester linkages between 5'-phosphoryl and 3'-hydroxyl groups in double-stranded DNA using NAD as a coenzyme and as the energy source for the reaction. It is essential for DNA replication and repair of damaged DNA.</text>
</comment>
<comment type="catalytic activity">
    <reaction evidence="1">
        <text>NAD(+) + (deoxyribonucleotide)n-3'-hydroxyl + 5'-phospho-(deoxyribonucleotide)m = (deoxyribonucleotide)n+m + AMP + beta-nicotinamide D-nucleotide.</text>
        <dbReference type="EC" id="6.5.1.2"/>
    </reaction>
</comment>
<comment type="cofactor">
    <cofactor evidence="1">
        <name>Mg(2+)</name>
        <dbReference type="ChEBI" id="CHEBI:18420"/>
    </cofactor>
    <cofactor evidence="1">
        <name>Mn(2+)</name>
        <dbReference type="ChEBI" id="CHEBI:29035"/>
    </cofactor>
</comment>
<comment type="similarity">
    <text evidence="1">Belongs to the NAD-dependent DNA ligase family. LigA subfamily.</text>
</comment>
<reference key="1">
    <citation type="submission" date="2007-06" db="EMBL/GenBank/DDBJ databases">
        <title>Complete sequence of Sinorhizobium medicae WSM419 chromosome.</title>
        <authorList>
            <consortium name="US DOE Joint Genome Institute"/>
            <person name="Copeland A."/>
            <person name="Lucas S."/>
            <person name="Lapidus A."/>
            <person name="Barry K."/>
            <person name="Glavina del Rio T."/>
            <person name="Dalin E."/>
            <person name="Tice H."/>
            <person name="Pitluck S."/>
            <person name="Chain P."/>
            <person name="Malfatti S."/>
            <person name="Shin M."/>
            <person name="Vergez L."/>
            <person name="Schmutz J."/>
            <person name="Larimer F."/>
            <person name="Land M."/>
            <person name="Hauser L."/>
            <person name="Kyrpides N."/>
            <person name="Mikhailova N."/>
            <person name="Reeve W.G."/>
            <person name="Richardson P."/>
        </authorList>
    </citation>
    <scope>NUCLEOTIDE SEQUENCE [LARGE SCALE GENOMIC DNA]</scope>
    <source>
        <strain>WSM419</strain>
    </source>
</reference>
<protein>
    <recommendedName>
        <fullName evidence="1">DNA ligase</fullName>
        <ecNumber evidence="1">6.5.1.2</ecNumber>
    </recommendedName>
    <alternativeName>
        <fullName evidence="1">Polydeoxyribonucleotide synthase [NAD(+)]</fullName>
    </alternativeName>
</protein>
<feature type="chain" id="PRO_0000313441" description="DNA ligase">
    <location>
        <begin position="1"/>
        <end position="717"/>
    </location>
</feature>
<feature type="domain" description="BRCT" evidence="1">
    <location>
        <begin position="639"/>
        <end position="717"/>
    </location>
</feature>
<feature type="active site" description="N6-AMP-lysine intermediate" evidence="1">
    <location>
        <position position="129"/>
    </location>
</feature>
<feature type="binding site" evidence="1">
    <location>
        <begin position="44"/>
        <end position="48"/>
    </location>
    <ligand>
        <name>NAD(+)</name>
        <dbReference type="ChEBI" id="CHEBI:57540"/>
    </ligand>
</feature>
<feature type="binding site" evidence="1">
    <location>
        <begin position="93"/>
        <end position="94"/>
    </location>
    <ligand>
        <name>NAD(+)</name>
        <dbReference type="ChEBI" id="CHEBI:57540"/>
    </ligand>
</feature>
<feature type="binding site" evidence="1">
    <location>
        <position position="127"/>
    </location>
    <ligand>
        <name>NAD(+)</name>
        <dbReference type="ChEBI" id="CHEBI:57540"/>
    </ligand>
</feature>
<feature type="binding site" evidence="1">
    <location>
        <position position="150"/>
    </location>
    <ligand>
        <name>NAD(+)</name>
        <dbReference type="ChEBI" id="CHEBI:57540"/>
    </ligand>
</feature>
<feature type="binding site" evidence="1">
    <location>
        <position position="186"/>
    </location>
    <ligand>
        <name>NAD(+)</name>
        <dbReference type="ChEBI" id="CHEBI:57540"/>
    </ligand>
</feature>
<feature type="binding site" evidence="1">
    <location>
        <position position="302"/>
    </location>
    <ligand>
        <name>NAD(+)</name>
        <dbReference type="ChEBI" id="CHEBI:57540"/>
    </ligand>
</feature>
<feature type="binding site" evidence="1">
    <location>
        <position position="326"/>
    </location>
    <ligand>
        <name>NAD(+)</name>
        <dbReference type="ChEBI" id="CHEBI:57540"/>
    </ligand>
</feature>
<feature type="binding site" evidence="1">
    <location>
        <position position="431"/>
    </location>
    <ligand>
        <name>Zn(2+)</name>
        <dbReference type="ChEBI" id="CHEBI:29105"/>
    </ligand>
</feature>
<feature type="binding site" evidence="1">
    <location>
        <position position="434"/>
    </location>
    <ligand>
        <name>Zn(2+)</name>
        <dbReference type="ChEBI" id="CHEBI:29105"/>
    </ligand>
</feature>
<feature type="binding site" evidence="1">
    <location>
        <position position="455"/>
    </location>
    <ligand>
        <name>Zn(2+)</name>
        <dbReference type="ChEBI" id="CHEBI:29105"/>
    </ligand>
</feature>
<feature type="binding site" evidence="1">
    <location>
        <position position="461"/>
    </location>
    <ligand>
        <name>Zn(2+)</name>
        <dbReference type="ChEBI" id="CHEBI:29105"/>
    </ligand>
</feature>
<sequence length="717" mass="79296">MLNQRKPVEQMTEAEAAEELAFLAAELSRHDMLYHGKDDPEISDADYDALKRRNDLIEERFPALIREDSPSQKVGAAPSLTFAPVVHARPMLSLDNSFSDEDARAFVAGIYRFLGRLPDGSIAFTVEPKIDGLSMSLRYENRRLVTAATRGDGTTGENVTANVRTIGMIPQRLPAEAPDVVEIRGEIYMAKSDFAALNAEMAAQGRPLYVNPRNTASGSLRQLDAKVTASRRLRFFAYAWGEMSAMPADTQLGMVETFKAWGFPVNPLMQRFFSADELLEHYHHIERERPELDYDIDGVVYKVDQLDLQARLGFRSRSPRWATAHKFPAERAFTRLKGIDIQVGRTGALTPVARLEPITVGGVVVTNATLHNEDYIRGIGNTGEPIREGRDIRIGDMVIVQRAGDVIPQIVDVVMDERPEGTEPYRFPTSCPICGSHAVRDINEKTGKVDAVRRCTGGFVCRAQAVEHLKHFVSRNAFDIEGLGSKQIEFFFESEDETLRIRTAPDIFTLERRQESSLTKLENIDGFGKVSVRKLYEAINARRSIGLHRFIYALGIRHVGETTAKLLARSYGTYEHFGAAMTEAGGFSGDAWNELNSIDGIGEVVARAIVEFYKEPRNLKVLSDLLEEVTPERAEMPVATDSPVAGKTVVFTGSLEKMTRDEAKAKAESLGAKVAGSVSKKTDIVVAGPGAGSKLDKARELGLQTMDEDEWLALIGG</sequence>